<evidence type="ECO:0000250" key="1">
    <source>
        <dbReference type="UniProtKB" id="O89091"/>
    </source>
</evidence>
<evidence type="ECO:0000250" key="2">
    <source>
        <dbReference type="UniProtKB" id="Q13118"/>
    </source>
</evidence>
<evidence type="ECO:0000255" key="3">
    <source>
        <dbReference type="PROSITE-ProRule" id="PRU00042"/>
    </source>
</evidence>
<evidence type="ECO:0000256" key="4">
    <source>
        <dbReference type="SAM" id="MobiDB-lite"/>
    </source>
</evidence>
<evidence type="ECO:0000269" key="5">
    <source>
    </source>
</evidence>
<evidence type="ECO:0000305" key="6"/>
<organism>
    <name type="scientific">Rattus norvegicus</name>
    <name type="common">Rat</name>
    <dbReference type="NCBI Taxonomy" id="10116"/>
    <lineage>
        <taxon>Eukaryota</taxon>
        <taxon>Metazoa</taxon>
        <taxon>Chordata</taxon>
        <taxon>Craniata</taxon>
        <taxon>Vertebrata</taxon>
        <taxon>Euteleostomi</taxon>
        <taxon>Mammalia</taxon>
        <taxon>Eutheria</taxon>
        <taxon>Euarchontoglires</taxon>
        <taxon>Glires</taxon>
        <taxon>Rodentia</taxon>
        <taxon>Myomorpha</taxon>
        <taxon>Muroidea</taxon>
        <taxon>Muridae</taxon>
        <taxon>Murinae</taxon>
        <taxon>Rattus</taxon>
    </lineage>
</organism>
<name>KLF10_RAT</name>
<comment type="function">
    <text evidence="1 2 5">Transcriptional repressor which binds to the consensus sequence 5'-GGTGTG-3'. Regulates the circadian expression of genes involved in lipogenesis, gluconeogenesis, and glycolysis in the liver. Represses the expression of PCK2, a rate-limiting step enzyme of gluconeogenesis. May play a role in the cell cycle regulation (By similarity). Plays a role in the regulation of the circadian clock; binds to the GC box sequence in the promoter of the core clock component ARTNL/BMAL1 and represses its transcriptional activity.</text>
</comment>
<comment type="subcellular location">
    <subcellularLocation>
        <location evidence="5">Nucleus</location>
    </subcellularLocation>
</comment>
<comment type="induction">
    <text evidence="5">Up-regulated in response to glucose.</text>
</comment>
<comment type="PTM">
    <text evidence="2">Ubiquitinated; mediated by SIAH1 and leading to its subsequent proteasomal degradation.</text>
</comment>
<comment type="similarity">
    <text evidence="6">Belongs to the Sp1 C2H2-type zinc-finger protein family.</text>
</comment>
<gene>
    <name type="primary">Klf10</name>
    <name type="synonym">Cpg20</name>
    <name type="synonym">Tieg</name>
    <name type="synonym">Tieg1</name>
</gene>
<accession>O08876</accession>
<accession>Q4QRA4</accession>
<protein>
    <recommendedName>
        <fullName>Krueppel-like factor 10</fullName>
    </recommendedName>
    <alternativeName>
        <fullName>Transforming growth factor-beta-inducible early growth response protein 1</fullName>
        <shortName>TGFB-inducible early growth response protein 1</shortName>
        <shortName>TIEG-1</shortName>
    </alternativeName>
    <alternativeName>
        <fullName>Zinc finger transcription factor homolog CPG20</fullName>
    </alternativeName>
</protein>
<reference key="1">
    <citation type="journal article" date="1998" name="J. Mol. Neurosci.">
        <title>Hippocampal plasticity involves extensive gene induction and multiple cellular mechanisms.</title>
        <authorList>
            <person name="Hevroni D."/>
            <person name="Rattner A."/>
            <person name="Bundman M."/>
            <person name="Lederfein D."/>
            <person name="Gabarah A."/>
            <person name="Mangelus M."/>
            <person name="Silverman M.A."/>
            <person name="Kedar H."/>
            <person name="Naor C."/>
            <person name="Kornuc M."/>
            <person name="Hanoch T."/>
            <person name="Seger R."/>
            <person name="Theill L.E."/>
            <person name="Nedivi E."/>
            <person name="Richter-Levin G."/>
            <person name="Citri Y."/>
        </authorList>
    </citation>
    <scope>NUCLEOTIDE SEQUENCE [MRNA]</scope>
    <source>
        <strain>Wistar</strain>
    </source>
</reference>
<reference key="2">
    <citation type="journal article" date="2004" name="Genome Res.">
        <title>The status, quality, and expansion of the NIH full-length cDNA project: the Mammalian Gene Collection (MGC).</title>
        <authorList>
            <consortium name="The MGC Project Team"/>
        </authorList>
    </citation>
    <scope>NUCLEOTIDE SEQUENCE [LARGE SCALE MRNA]</scope>
    <source>
        <tissue>Thymus</tissue>
    </source>
</reference>
<reference key="3">
    <citation type="journal article" date="2010" name="Genes Cells">
        <title>Transcriptional repressor TIEG1 regulates Bmal1 gene through GC box and controls circadian clockwork.</title>
        <authorList>
            <person name="Hirota T."/>
            <person name="Kon N."/>
            <person name="Itagaki T."/>
            <person name="Hoshina N."/>
            <person name="Okano T."/>
            <person name="Fukada Y."/>
        </authorList>
    </citation>
    <scope>FUNCTION</scope>
    <scope>SUBCELLULAR LOCATION</scope>
    <scope>INDUCTION</scope>
</reference>
<sequence length="480" mass="51829">MLNFGASLQQASEGKMELISEKSKEGAHPWDKAEQSDFEAVEALMSMSCDWKSHFKKYLENRPVTPVSDTSEEDSLLPGTPDLQTVPAFCLTPPYSPSDFEPSQGSNLTAPAPPTGHFRSLSDAAKPPSIAPFKEEEKSPLAAPPLPKAQATSVIRHTADAQLCNHQSCPVKAASILNYQDNSFRRRTHINVEATRKNIPCAAVSPNRPKPEPSTAANGAEKAGTAPYDFAVPSSETVICRSSQPAPTSPVQKSVLMSSPTVSTGGVPPLPVICQMVPLPANNSLVTTVVPSSPPSQPPAVCSPVLFMGTQVPKGTVMFVVPQPVVQSPKPPVVSPNGTRLSPIAPAPGFSPSAARVTPQIDSSRVRSHICSHPGCGKTYFKSSHLKAHVRTHTGEKPFSCSWKGCERRFARSDELSRHRRTHTGEKKFACPMCDRRFMRSDHLTKHARRHLSAKKLPNWQMEVSKLNDIALPPATASAQ</sequence>
<feature type="chain" id="PRO_0000047179" description="Krueppel-like factor 10">
    <location>
        <begin position="1"/>
        <end position="480"/>
    </location>
</feature>
<feature type="zinc finger region" description="C2H2-type 1" evidence="3">
    <location>
        <begin position="369"/>
        <end position="393"/>
    </location>
</feature>
<feature type="zinc finger region" description="C2H2-type 2" evidence="3">
    <location>
        <begin position="399"/>
        <end position="423"/>
    </location>
</feature>
<feature type="zinc finger region" description="C2H2-type 3" evidence="3">
    <location>
        <begin position="429"/>
        <end position="451"/>
    </location>
</feature>
<feature type="region of interest" description="Disordered" evidence="4">
    <location>
        <begin position="1"/>
        <end position="32"/>
    </location>
</feature>
<feature type="region of interest" description="Disordered" evidence="4">
    <location>
        <begin position="64"/>
        <end position="83"/>
    </location>
</feature>
<feature type="region of interest" description="Disordered" evidence="4">
    <location>
        <begin position="97"/>
        <end position="146"/>
    </location>
</feature>
<feature type="region of interest" description="Disordered" evidence="4">
    <location>
        <begin position="202"/>
        <end position="222"/>
    </location>
</feature>
<feature type="compositionally biased region" description="Polar residues" evidence="4">
    <location>
        <begin position="1"/>
        <end position="12"/>
    </location>
</feature>
<feature type="compositionally biased region" description="Basic and acidic residues" evidence="4">
    <location>
        <begin position="14"/>
        <end position="32"/>
    </location>
</feature>
<feature type="modified residue" description="Phosphoserine" evidence="2">
    <location>
        <position position="183"/>
    </location>
</feature>
<feature type="modified residue" description="Phosphoserine" evidence="2">
    <location>
        <position position="249"/>
    </location>
</feature>
<keyword id="KW-0090">Biological rhythms</keyword>
<keyword id="KW-0238">DNA-binding</keyword>
<keyword id="KW-0479">Metal-binding</keyword>
<keyword id="KW-0539">Nucleus</keyword>
<keyword id="KW-0597">Phosphoprotein</keyword>
<keyword id="KW-1185">Reference proteome</keyword>
<keyword id="KW-0677">Repeat</keyword>
<keyword id="KW-0678">Repressor</keyword>
<keyword id="KW-0804">Transcription</keyword>
<keyword id="KW-0805">Transcription regulation</keyword>
<keyword id="KW-0832">Ubl conjugation</keyword>
<keyword id="KW-0862">Zinc</keyword>
<keyword id="KW-0863">Zinc-finger</keyword>
<proteinExistence type="evidence at transcript level"/>
<dbReference type="EMBL" id="U78875">
    <property type="protein sequence ID" value="AAC99475.1"/>
    <property type="molecule type" value="mRNA"/>
</dbReference>
<dbReference type="EMBL" id="BC097309">
    <property type="protein sequence ID" value="AAH97309.1"/>
    <property type="molecule type" value="mRNA"/>
</dbReference>
<dbReference type="RefSeq" id="NP_112397.1">
    <property type="nucleotide sequence ID" value="NM_031135.2"/>
</dbReference>
<dbReference type="SMR" id="O08876"/>
<dbReference type="FunCoup" id="O08876">
    <property type="interactions" value="166"/>
</dbReference>
<dbReference type="STRING" id="10116.ENSRNOP00000008350"/>
<dbReference type="GlyGen" id="O08876">
    <property type="glycosylation" value="1 site"/>
</dbReference>
<dbReference type="PhosphoSitePlus" id="O08876"/>
<dbReference type="PaxDb" id="10116-ENSRNOP00000008350"/>
<dbReference type="Ensembl" id="ENSRNOT00000008350.4">
    <property type="protein sequence ID" value="ENSRNOP00000008350.1"/>
    <property type="gene ID" value="ENSRNOG00000006118.6"/>
</dbReference>
<dbReference type="GeneID" id="81813"/>
<dbReference type="KEGG" id="rno:81813"/>
<dbReference type="UCSC" id="RGD:621652">
    <property type="organism name" value="rat"/>
</dbReference>
<dbReference type="AGR" id="RGD:621652"/>
<dbReference type="CTD" id="7071"/>
<dbReference type="RGD" id="621652">
    <property type="gene designation" value="Klf10"/>
</dbReference>
<dbReference type="eggNOG" id="KOG1721">
    <property type="taxonomic scope" value="Eukaryota"/>
</dbReference>
<dbReference type="GeneTree" id="ENSGT00940000159405"/>
<dbReference type="HOGENOM" id="CLU_046370_1_0_1"/>
<dbReference type="InParanoid" id="O08876"/>
<dbReference type="OrthoDB" id="4748970at2759"/>
<dbReference type="PhylomeDB" id="O08876"/>
<dbReference type="TreeFam" id="TF315506"/>
<dbReference type="PRO" id="PR:O08876"/>
<dbReference type="Proteomes" id="UP000002494">
    <property type="component" value="Chromosome 7"/>
</dbReference>
<dbReference type="Bgee" id="ENSRNOG00000006118">
    <property type="expression patterns" value="Expressed in lung and 20 other cell types or tissues"/>
</dbReference>
<dbReference type="ExpressionAtlas" id="O08876">
    <property type="expression patterns" value="baseline and differential"/>
</dbReference>
<dbReference type="GO" id="GO:0005634">
    <property type="term" value="C:nucleus"/>
    <property type="evidence" value="ECO:0000314"/>
    <property type="project" value="UniProtKB"/>
</dbReference>
<dbReference type="GO" id="GO:0001046">
    <property type="term" value="F:core promoter sequence-specific DNA binding"/>
    <property type="evidence" value="ECO:0000250"/>
    <property type="project" value="UniProtKB"/>
</dbReference>
<dbReference type="GO" id="GO:0001228">
    <property type="term" value="F:DNA-binding transcription activator activity, RNA polymerase II-specific"/>
    <property type="evidence" value="ECO:0000266"/>
    <property type="project" value="RGD"/>
</dbReference>
<dbReference type="GO" id="GO:0000981">
    <property type="term" value="F:DNA-binding transcription factor activity, RNA polymerase II-specific"/>
    <property type="evidence" value="ECO:0000318"/>
    <property type="project" value="GO_Central"/>
</dbReference>
<dbReference type="GO" id="GO:0000978">
    <property type="term" value="F:RNA polymerase II cis-regulatory region sequence-specific DNA binding"/>
    <property type="evidence" value="ECO:0000266"/>
    <property type="project" value="RGD"/>
</dbReference>
<dbReference type="GO" id="GO:1990837">
    <property type="term" value="F:sequence-specific double-stranded DNA binding"/>
    <property type="evidence" value="ECO:0000266"/>
    <property type="project" value="RGD"/>
</dbReference>
<dbReference type="GO" id="GO:0008270">
    <property type="term" value="F:zinc ion binding"/>
    <property type="evidence" value="ECO:0007669"/>
    <property type="project" value="UniProtKB-KW"/>
</dbReference>
<dbReference type="GO" id="GO:0030282">
    <property type="term" value="P:bone mineralization"/>
    <property type="evidence" value="ECO:0000266"/>
    <property type="project" value="RGD"/>
</dbReference>
<dbReference type="GO" id="GO:1990859">
    <property type="term" value="P:cellular response to endothelin"/>
    <property type="evidence" value="ECO:0000270"/>
    <property type="project" value="RGD"/>
</dbReference>
<dbReference type="GO" id="GO:0009267">
    <property type="term" value="P:cellular response to starvation"/>
    <property type="evidence" value="ECO:0000250"/>
    <property type="project" value="UniProtKB"/>
</dbReference>
<dbReference type="GO" id="GO:0007623">
    <property type="term" value="P:circadian rhythm"/>
    <property type="evidence" value="ECO:0000266"/>
    <property type="project" value="RGD"/>
</dbReference>
<dbReference type="GO" id="GO:0045892">
    <property type="term" value="P:negative regulation of DNA-templated transcription"/>
    <property type="evidence" value="ECO:0000250"/>
    <property type="project" value="UniProtKB"/>
</dbReference>
<dbReference type="GO" id="GO:0045672">
    <property type="term" value="P:positive regulation of osteoclast differentiation"/>
    <property type="evidence" value="ECO:0000266"/>
    <property type="project" value="RGD"/>
</dbReference>
<dbReference type="GO" id="GO:0045944">
    <property type="term" value="P:positive regulation of transcription by RNA polymerase II"/>
    <property type="evidence" value="ECO:0000266"/>
    <property type="project" value="RGD"/>
</dbReference>
<dbReference type="GO" id="GO:0042752">
    <property type="term" value="P:regulation of circadian rhythm"/>
    <property type="evidence" value="ECO:0000315"/>
    <property type="project" value="UniProtKB"/>
</dbReference>
<dbReference type="GO" id="GO:0006355">
    <property type="term" value="P:regulation of DNA-templated transcription"/>
    <property type="evidence" value="ECO:0000266"/>
    <property type="project" value="RGD"/>
</dbReference>
<dbReference type="GO" id="GO:0006357">
    <property type="term" value="P:regulation of transcription by RNA polymerase II"/>
    <property type="evidence" value="ECO:0000318"/>
    <property type="project" value="GO_Central"/>
</dbReference>
<dbReference type="GO" id="GO:0035019">
    <property type="term" value="P:somatic stem cell population maintenance"/>
    <property type="evidence" value="ECO:0000266"/>
    <property type="project" value="RGD"/>
</dbReference>
<dbReference type="CDD" id="cd21572">
    <property type="entry name" value="KLF10_N"/>
    <property type="match status" value="1"/>
</dbReference>
<dbReference type="FunFam" id="3.30.160.60:FF:000134">
    <property type="entry name" value="Krueppel-like factor 11"/>
    <property type="match status" value="1"/>
</dbReference>
<dbReference type="FunFam" id="3.30.160.60:FF:000018">
    <property type="entry name" value="Krueppel-like factor 15"/>
    <property type="match status" value="1"/>
</dbReference>
<dbReference type="FunFam" id="3.30.160.60:FF:000205">
    <property type="entry name" value="Putative Krueppel-like factor 10"/>
    <property type="match status" value="1"/>
</dbReference>
<dbReference type="Gene3D" id="3.30.160.60">
    <property type="entry name" value="Classic Zinc Finger"/>
    <property type="match status" value="3"/>
</dbReference>
<dbReference type="InterPro" id="IPR036236">
    <property type="entry name" value="Znf_C2H2_sf"/>
</dbReference>
<dbReference type="InterPro" id="IPR013087">
    <property type="entry name" value="Znf_C2H2_type"/>
</dbReference>
<dbReference type="PANTHER" id="PTHR23235:SF64">
    <property type="entry name" value="KRUEPPEL-LIKE FACTOR 10"/>
    <property type="match status" value="1"/>
</dbReference>
<dbReference type="PANTHER" id="PTHR23235">
    <property type="entry name" value="KRUEPPEL-LIKE TRANSCRIPTION FACTOR"/>
    <property type="match status" value="1"/>
</dbReference>
<dbReference type="Pfam" id="PF00096">
    <property type="entry name" value="zf-C2H2"/>
    <property type="match status" value="3"/>
</dbReference>
<dbReference type="SMART" id="SM00355">
    <property type="entry name" value="ZnF_C2H2"/>
    <property type="match status" value="3"/>
</dbReference>
<dbReference type="SUPFAM" id="SSF57667">
    <property type="entry name" value="beta-beta-alpha zinc fingers"/>
    <property type="match status" value="2"/>
</dbReference>
<dbReference type="PROSITE" id="PS00028">
    <property type="entry name" value="ZINC_FINGER_C2H2_1"/>
    <property type="match status" value="3"/>
</dbReference>
<dbReference type="PROSITE" id="PS50157">
    <property type="entry name" value="ZINC_FINGER_C2H2_2"/>
    <property type="match status" value="3"/>
</dbReference>